<reference key="1">
    <citation type="journal article" date="2002" name="DNA Res.">
        <title>Complete genomic sequence of nitrogen-fixing symbiotic bacterium Bradyrhizobium japonicum USDA110.</title>
        <authorList>
            <person name="Kaneko T."/>
            <person name="Nakamura Y."/>
            <person name="Sato S."/>
            <person name="Minamisawa K."/>
            <person name="Uchiumi T."/>
            <person name="Sasamoto S."/>
            <person name="Watanabe A."/>
            <person name="Idesawa K."/>
            <person name="Iriguchi M."/>
            <person name="Kawashima K."/>
            <person name="Kohara M."/>
            <person name="Matsumoto M."/>
            <person name="Shimpo S."/>
            <person name="Tsuruoka H."/>
            <person name="Wada T."/>
            <person name="Yamada M."/>
            <person name="Tabata S."/>
        </authorList>
    </citation>
    <scope>NUCLEOTIDE SEQUENCE [LARGE SCALE GENOMIC DNA]</scope>
    <source>
        <strain>JCM 10833 / BCRC 13528 / IAM 13628 / NBRC 14792 / USDA 110</strain>
    </source>
</reference>
<dbReference type="EC" id="2.7.7.59" evidence="1"/>
<dbReference type="EC" id="3.1.4.-" evidence="1"/>
<dbReference type="EMBL" id="BA000040">
    <property type="protein sequence ID" value="BAC46181.1"/>
    <property type="status" value="ALT_INIT"/>
    <property type="molecule type" value="Genomic_DNA"/>
</dbReference>
<dbReference type="RefSeq" id="NP_767556.1">
    <property type="nucleotide sequence ID" value="NC_004463.1"/>
</dbReference>
<dbReference type="RefSeq" id="WP_038965190.1">
    <property type="nucleotide sequence ID" value="NC_004463.1"/>
</dbReference>
<dbReference type="SMR" id="Q89VX9"/>
<dbReference type="FunCoup" id="Q89VX9">
    <property type="interactions" value="338"/>
</dbReference>
<dbReference type="STRING" id="224911.AAV28_01425"/>
<dbReference type="EnsemblBacteria" id="BAC46181">
    <property type="protein sequence ID" value="BAC46181"/>
    <property type="gene ID" value="BAC46181"/>
</dbReference>
<dbReference type="GeneID" id="46488186"/>
<dbReference type="KEGG" id="bja:bll0916"/>
<dbReference type="PATRIC" id="fig|224911.44.peg.305"/>
<dbReference type="eggNOG" id="COG2844">
    <property type="taxonomic scope" value="Bacteria"/>
</dbReference>
<dbReference type="HOGENOM" id="CLU_012833_1_0_5"/>
<dbReference type="InParanoid" id="Q89VX9"/>
<dbReference type="OrthoDB" id="9758038at2"/>
<dbReference type="Proteomes" id="UP000002526">
    <property type="component" value="Chromosome"/>
</dbReference>
<dbReference type="GO" id="GO:0008773">
    <property type="term" value="F:[protein-PII] uridylyltransferase activity"/>
    <property type="evidence" value="ECO:0000318"/>
    <property type="project" value="GO_Central"/>
</dbReference>
<dbReference type="GO" id="GO:0008081">
    <property type="term" value="F:phosphoric diester hydrolase activity"/>
    <property type="evidence" value="ECO:0007669"/>
    <property type="project" value="UniProtKB-UniRule"/>
</dbReference>
<dbReference type="GO" id="GO:0009399">
    <property type="term" value="P:nitrogen fixation"/>
    <property type="evidence" value="ECO:0007669"/>
    <property type="project" value="UniProtKB-UniRule"/>
</dbReference>
<dbReference type="GO" id="GO:0006808">
    <property type="term" value="P:regulation of nitrogen utilization"/>
    <property type="evidence" value="ECO:0007669"/>
    <property type="project" value="UniProtKB-UniRule"/>
</dbReference>
<dbReference type="CDD" id="cd04899">
    <property type="entry name" value="ACT_ACR-UUR-like_2"/>
    <property type="match status" value="1"/>
</dbReference>
<dbReference type="CDD" id="cd04900">
    <property type="entry name" value="ACT_UUR-like_1"/>
    <property type="match status" value="1"/>
</dbReference>
<dbReference type="CDD" id="cd05401">
    <property type="entry name" value="NT_GlnE_GlnD_like"/>
    <property type="match status" value="1"/>
</dbReference>
<dbReference type="Gene3D" id="3.30.70.260">
    <property type="match status" value="1"/>
</dbReference>
<dbReference type="Gene3D" id="3.30.460.10">
    <property type="entry name" value="Beta Polymerase, domain 2"/>
    <property type="match status" value="1"/>
</dbReference>
<dbReference type="Gene3D" id="1.10.3090.10">
    <property type="entry name" value="cca-adding enzyme, domain 2"/>
    <property type="match status" value="1"/>
</dbReference>
<dbReference type="HAMAP" id="MF_00277">
    <property type="entry name" value="PII_uridylyl_transf"/>
    <property type="match status" value="1"/>
</dbReference>
<dbReference type="InterPro" id="IPR045865">
    <property type="entry name" value="ACT-like_dom_sf"/>
</dbReference>
<dbReference type="InterPro" id="IPR002912">
    <property type="entry name" value="ACT_dom"/>
</dbReference>
<dbReference type="InterPro" id="IPR003607">
    <property type="entry name" value="HD/PDEase_dom"/>
</dbReference>
<dbReference type="InterPro" id="IPR006674">
    <property type="entry name" value="HD_domain"/>
</dbReference>
<dbReference type="InterPro" id="IPR043519">
    <property type="entry name" value="NT_sf"/>
</dbReference>
<dbReference type="InterPro" id="IPR013546">
    <property type="entry name" value="PII_UdlTrfase/GS_AdlTrfase"/>
</dbReference>
<dbReference type="InterPro" id="IPR002934">
    <property type="entry name" value="Polymerase_NTP_transf_dom"/>
</dbReference>
<dbReference type="InterPro" id="IPR010043">
    <property type="entry name" value="UTase/UR"/>
</dbReference>
<dbReference type="NCBIfam" id="NF003467">
    <property type="entry name" value="PRK05092.1"/>
    <property type="match status" value="1"/>
</dbReference>
<dbReference type="NCBIfam" id="TIGR01693">
    <property type="entry name" value="UTase_glnD"/>
    <property type="match status" value="1"/>
</dbReference>
<dbReference type="PANTHER" id="PTHR47320">
    <property type="entry name" value="BIFUNCTIONAL URIDYLYLTRANSFERASE/URIDYLYL-REMOVING ENZYME"/>
    <property type="match status" value="1"/>
</dbReference>
<dbReference type="PANTHER" id="PTHR47320:SF1">
    <property type="entry name" value="BIFUNCTIONAL URIDYLYLTRANSFERASE_URIDYLYL-REMOVING ENZYME"/>
    <property type="match status" value="1"/>
</dbReference>
<dbReference type="Pfam" id="PF01842">
    <property type="entry name" value="ACT"/>
    <property type="match status" value="1"/>
</dbReference>
<dbReference type="Pfam" id="PF08335">
    <property type="entry name" value="GlnD_UR_UTase"/>
    <property type="match status" value="1"/>
</dbReference>
<dbReference type="Pfam" id="PF01966">
    <property type="entry name" value="HD"/>
    <property type="match status" value="1"/>
</dbReference>
<dbReference type="Pfam" id="PF01909">
    <property type="entry name" value="NTP_transf_2"/>
    <property type="match status" value="1"/>
</dbReference>
<dbReference type="PIRSF" id="PIRSF006288">
    <property type="entry name" value="PII_uridyltransf"/>
    <property type="match status" value="1"/>
</dbReference>
<dbReference type="SMART" id="SM00471">
    <property type="entry name" value="HDc"/>
    <property type="match status" value="1"/>
</dbReference>
<dbReference type="SUPFAM" id="SSF55021">
    <property type="entry name" value="ACT-like"/>
    <property type="match status" value="2"/>
</dbReference>
<dbReference type="SUPFAM" id="SSF81301">
    <property type="entry name" value="Nucleotidyltransferase"/>
    <property type="match status" value="1"/>
</dbReference>
<dbReference type="SUPFAM" id="SSF81593">
    <property type="entry name" value="Nucleotidyltransferase substrate binding subunit/domain"/>
    <property type="match status" value="1"/>
</dbReference>
<dbReference type="SUPFAM" id="SSF81891">
    <property type="entry name" value="Poly A polymerase C-terminal region-like"/>
    <property type="match status" value="1"/>
</dbReference>
<dbReference type="PROSITE" id="PS51671">
    <property type="entry name" value="ACT"/>
    <property type="match status" value="2"/>
</dbReference>
<dbReference type="PROSITE" id="PS51831">
    <property type="entry name" value="HD"/>
    <property type="match status" value="1"/>
</dbReference>
<keyword id="KW-0378">Hydrolase</keyword>
<keyword id="KW-0460">Magnesium</keyword>
<keyword id="KW-0511">Multifunctional enzyme</keyword>
<keyword id="KW-0535">Nitrogen fixation</keyword>
<keyword id="KW-0548">Nucleotidyltransferase</keyword>
<keyword id="KW-1185">Reference proteome</keyword>
<keyword id="KW-0677">Repeat</keyword>
<keyword id="KW-0808">Transferase</keyword>
<evidence type="ECO:0000255" key="1">
    <source>
        <dbReference type="HAMAP-Rule" id="MF_00277"/>
    </source>
</evidence>
<evidence type="ECO:0000255" key="2">
    <source>
        <dbReference type="PROSITE-ProRule" id="PRU01175"/>
    </source>
</evidence>
<evidence type="ECO:0000305" key="3"/>
<feature type="chain" id="PRO_0000192721" description="Bifunctional uridylyltransferase/uridylyl-removing enzyme">
    <location>
        <begin position="1"/>
        <end position="929"/>
    </location>
</feature>
<feature type="domain" description="HD" evidence="2">
    <location>
        <begin position="499"/>
        <end position="622"/>
    </location>
</feature>
<feature type="domain" description="ACT 1" evidence="1">
    <location>
        <begin position="740"/>
        <end position="822"/>
    </location>
</feature>
<feature type="domain" description="ACT 2" evidence="1">
    <location>
        <begin position="850"/>
        <end position="927"/>
    </location>
</feature>
<feature type="region of interest" description="Uridylyltransferase">
    <location>
        <begin position="1"/>
        <end position="383"/>
    </location>
</feature>
<feature type="region of interest" description="Uridylyl-removing">
    <location>
        <begin position="384"/>
        <end position="739"/>
    </location>
</feature>
<comment type="function">
    <text evidence="1">Modifies, by uridylylation and deuridylylation, the PII regulatory proteins (GlnB and homologs), in response to the nitrogen status of the cell that GlnD senses through the glutamine level. Under low glutamine levels, catalyzes the conversion of the PII proteins and UTP to PII-UMP and PPi, while under higher glutamine levels, GlnD hydrolyzes PII-UMP to PII and UMP (deuridylylation). Thus, controls uridylylation state and activity of the PII proteins, and plays an important role in the regulation of nitrogen fixation and metabolism.</text>
</comment>
<comment type="catalytic activity">
    <reaction evidence="1">
        <text>[protein-PII]-L-tyrosine + UTP = [protein-PII]-uridylyl-L-tyrosine + diphosphate</text>
        <dbReference type="Rhea" id="RHEA:13673"/>
        <dbReference type="Rhea" id="RHEA-COMP:12147"/>
        <dbReference type="Rhea" id="RHEA-COMP:12148"/>
        <dbReference type="ChEBI" id="CHEBI:33019"/>
        <dbReference type="ChEBI" id="CHEBI:46398"/>
        <dbReference type="ChEBI" id="CHEBI:46858"/>
        <dbReference type="ChEBI" id="CHEBI:90602"/>
        <dbReference type="EC" id="2.7.7.59"/>
    </reaction>
</comment>
<comment type="catalytic activity">
    <reaction evidence="1">
        <text>[protein-PII]-uridylyl-L-tyrosine + H2O = [protein-PII]-L-tyrosine + UMP + H(+)</text>
        <dbReference type="Rhea" id="RHEA:48600"/>
        <dbReference type="Rhea" id="RHEA-COMP:12147"/>
        <dbReference type="Rhea" id="RHEA-COMP:12148"/>
        <dbReference type="ChEBI" id="CHEBI:15377"/>
        <dbReference type="ChEBI" id="CHEBI:15378"/>
        <dbReference type="ChEBI" id="CHEBI:46858"/>
        <dbReference type="ChEBI" id="CHEBI:57865"/>
        <dbReference type="ChEBI" id="CHEBI:90602"/>
    </reaction>
</comment>
<comment type="cofactor">
    <cofactor evidence="1">
        <name>Mg(2+)</name>
        <dbReference type="ChEBI" id="CHEBI:18420"/>
    </cofactor>
</comment>
<comment type="activity regulation">
    <text evidence="1">Uridylyltransferase (UTase) activity is inhibited by glutamine, while glutamine activates uridylyl-removing (UR) activity.</text>
</comment>
<comment type="domain">
    <text evidence="1">Has four distinct domains: an N-terminal nucleotidyltransferase (NT) domain responsible for UTase activity, a central HD domain that encodes UR activity, and two C-terminal ACT domains that seem to have a role in glutamine sensing.</text>
</comment>
<comment type="similarity">
    <text evidence="1">Belongs to the GlnD family.</text>
</comment>
<comment type="sequence caution" evidence="3">
    <conflict type="erroneous initiation">
        <sequence resource="EMBL-CDS" id="BAC46181"/>
    </conflict>
</comment>
<organism>
    <name type="scientific">Bradyrhizobium diazoefficiens (strain JCM 10833 / BCRC 13528 / IAM 13628 / NBRC 14792 / USDA 110)</name>
    <dbReference type="NCBI Taxonomy" id="224911"/>
    <lineage>
        <taxon>Bacteria</taxon>
        <taxon>Pseudomonadati</taxon>
        <taxon>Pseudomonadota</taxon>
        <taxon>Alphaproteobacteria</taxon>
        <taxon>Hyphomicrobiales</taxon>
        <taxon>Nitrobacteraceae</taxon>
        <taxon>Bradyrhizobium</taxon>
    </lineage>
</organism>
<gene>
    <name evidence="1" type="primary">glnD</name>
    <name type="ordered locus">bll0916</name>
</gene>
<protein>
    <recommendedName>
        <fullName evidence="1">Bifunctional uridylyltransferase/uridylyl-removing enzyme</fullName>
        <shortName evidence="1">UTase/UR</shortName>
    </recommendedName>
    <alternativeName>
        <fullName evidence="1">Bifunctional [protein-PII] modification enzyme</fullName>
    </alternativeName>
    <alternativeName>
        <fullName evidence="1">Bifunctional nitrogen sensor protein</fullName>
    </alternativeName>
    <domain>
        <recommendedName>
            <fullName evidence="1">[Protein-PII] uridylyltransferase</fullName>
            <shortName evidence="1">PII uridylyltransferase</shortName>
            <shortName evidence="1">UTase</shortName>
            <ecNumber evidence="1">2.7.7.59</ecNumber>
        </recommendedName>
    </domain>
    <domain>
        <recommendedName>
            <fullName evidence="1">[Protein-PII]-UMP uridylyl-removing enzyme</fullName>
            <shortName evidence="1">UR</shortName>
            <ecNumber evidence="1">3.1.4.-</ecNumber>
        </recommendedName>
    </domain>
</protein>
<sequence>MDSVTTEHKQEVDDRFDTARITAAVDALAEKHQGREDAFRTAMAQLLKAELIAARAAAQAILLKDRHGRRCAERLCHVQDEIIRILYSAATRHLYRSPIPSGAERMAVVATGGYGRGLMAPESDIDLLFILPYKQTAWGEQVAEAILYCLWDMGLKVGHATRSVDESIRQARGDMTIRTAILETRFLTGDQPLYDELVERFDKEVVQGTASEFVTAKLAEREERHRRGGQSRYLVEPNVKDGKGALRDLHTLFWIAKYVYRVRDTDELVERGVFDAQEYRTFRRCADFLWSVRCNLHFYSGRAEERLSFDLQREIAVRLGYTSHPGMQDVERFMKHYFLVAKEVGNLTAILCAKLEDQQAKPAPVLSRMMARLRPTPAKRRVPDSDDFIVDNNRINVAAPDVFKHDPVNLIRIFRLAQKHNLAFHPDAMRDVTRSLGLINAQLRENPEANRLFMEILTSDNAEIVLRRMNETGVLGHFIRAFGKIVSMMQFNMYHHYTVDEHLIRCVGFLQDIERGGIEEFAVASDLMRKIRPEHRSVIYIATLLHDVAKGRPEDHSIAGAKVARRLCPRLGFSPADTELVAWLIEEHLTMSTVAQSRDLSDRKTIENFAAVVQSVEQMKLLTILTTADIRGVGPGVWNGWKAQLLRSLYYETEPVLTGGFSEVDRGKRLTAAYAEFRNAFAEWPADELDAYIARHYPAYWLKVELPRKIRHARFVRSSEQAGHKLAINVGFDEVRGVTELTIFAADHPWLLSIIAGACASAGANIVDAQIYTTTDGRALDTISISREYDRDEDEGRRATRIGEMIEDVLEGKLRLPEVVARRTVRSKARPFVIEPEVTINNQWSDRYTVIEVSGLDRPGLLYELTTAISKLNLNIASAHVATFGERARDVFYVTDLLGAQINAPTRQSAIKSALTHVMAGDKAVQPAA</sequence>
<accession>Q89VX9</accession>
<name>GLND_BRADU</name>
<proteinExistence type="inferred from homology"/>